<reference key="1">
    <citation type="journal article" date="2009" name="Genome Res.">
        <title>Newly introduced genomic prophage islands are critical determinants of in vivo competitiveness in the Liverpool epidemic strain of Pseudomonas aeruginosa.</title>
        <authorList>
            <person name="Winstanley C."/>
            <person name="Langille M.G.I."/>
            <person name="Fothergill J.L."/>
            <person name="Kukavica-Ibrulj I."/>
            <person name="Paradis-Bleau C."/>
            <person name="Sanschagrin F."/>
            <person name="Thomson N.R."/>
            <person name="Winsor G.L."/>
            <person name="Quail M.A."/>
            <person name="Lennard N."/>
            <person name="Bignell A."/>
            <person name="Clarke L."/>
            <person name="Seeger K."/>
            <person name="Saunders D."/>
            <person name="Harris D."/>
            <person name="Parkhill J."/>
            <person name="Hancock R.E.W."/>
            <person name="Brinkman F.S.L."/>
            <person name="Levesque R.C."/>
        </authorList>
    </citation>
    <scope>NUCLEOTIDE SEQUENCE [LARGE SCALE GENOMIC DNA]</scope>
    <source>
        <strain>LESB58</strain>
    </source>
</reference>
<sequence>MTQVTVKELAQVVDTPVERLLLQMRDAGLPHTSAEQVVTDSEKQALLTHLKGSHGDRASEPRKITLQRKTTTTLKVGGSKTVSVEVRKKKTYVKRSPDEIEAERQRELEEQRAAEEAERLKAEEAAARQRAEEEARKAEEAARAKAAQEAAATAGAEPAVVADVAVAEPVAKPAAVEERKKEEPRRAPKRDEDDDRRDRKHTQHRPSVKEKEKVPAPRVAPRSTDEESDGYRRGGRGGKSKLKKRNQHGFQNPTGPIVREVNIGETITVAELAAQMSVKGAEVVKFMFKMGSPVTINQVLDQETAQLVAEELGHKVKLVSENALEEQLAESLKFEGEAVTRAPVVTVMGHVDHGKTSLLDYIRRAKVAAGEAGGITQHIGAYHVETERGMVTFLDTPGHAAFTAMRARGAQATDIVILVVAADDGVMPQTQEAVQHAKAAGVPIVVAVNKIDKPEANPDNIKNGLAALDVIPEEWGGDAPFVPVSAKLGTGVDELLEAVLLQAEVLELKATPSAPGRGVVVESRLDKGRGPVATVLVQDGTLRQGDMVLVGINYGRVRAMLDENGKPIKEAGPSIPVEILGLDGTPDAGDEMTVVADEKKAREVALFRQGKFREVKLARAHAGKLENIFENMGQEEKKTLNIVLKADVRGSLEALQGSLSGLGNDEVQVRVVGGGVGGITESDANLALASNAVLFGFNVRADAGARKIVEAEGLDMRYYNVIYDIIEDVKKALTGMLGSDLRENILGIAEVRDVFRSPKFGAIAGCMVTEGMVHRNRPIRVLRDDVVIFEGELESLRRFKDDVAEVRAGMECGIGVKSYNDVKVGDKIEVFEKVEVARSL</sequence>
<accession>B7V1F6</accession>
<protein>
    <recommendedName>
        <fullName evidence="2">Translation initiation factor IF-2</fullName>
    </recommendedName>
</protein>
<comment type="function">
    <text evidence="2">One of the essential components for the initiation of protein synthesis. Protects formylmethionyl-tRNA from spontaneous hydrolysis and promotes its binding to the 30S ribosomal subunits. Also involved in the hydrolysis of GTP during the formation of the 70S ribosomal complex.</text>
</comment>
<comment type="subcellular location">
    <subcellularLocation>
        <location evidence="2">Cytoplasm</location>
    </subcellularLocation>
</comment>
<comment type="similarity">
    <text evidence="2">Belongs to the TRAFAC class translation factor GTPase superfamily. Classic translation factor GTPase family. IF-2 subfamily.</text>
</comment>
<feature type="chain" id="PRO_1000117335" description="Translation initiation factor IF-2">
    <location>
        <begin position="1"/>
        <end position="840"/>
    </location>
</feature>
<feature type="domain" description="tr-type G">
    <location>
        <begin position="340"/>
        <end position="509"/>
    </location>
</feature>
<feature type="region of interest" description="Disordered" evidence="3">
    <location>
        <begin position="95"/>
        <end position="155"/>
    </location>
</feature>
<feature type="region of interest" description="Disordered" evidence="3">
    <location>
        <begin position="172"/>
        <end position="256"/>
    </location>
</feature>
<feature type="region of interest" description="G1" evidence="1">
    <location>
        <begin position="349"/>
        <end position="356"/>
    </location>
</feature>
<feature type="region of interest" description="G2" evidence="1">
    <location>
        <begin position="374"/>
        <end position="378"/>
    </location>
</feature>
<feature type="region of interest" description="G3" evidence="1">
    <location>
        <begin position="395"/>
        <end position="398"/>
    </location>
</feature>
<feature type="region of interest" description="G4" evidence="1">
    <location>
        <begin position="449"/>
        <end position="452"/>
    </location>
</feature>
<feature type="region of interest" description="G5" evidence="1">
    <location>
        <begin position="485"/>
        <end position="487"/>
    </location>
</feature>
<feature type="compositionally biased region" description="Basic and acidic residues" evidence="3">
    <location>
        <begin position="95"/>
        <end position="143"/>
    </location>
</feature>
<feature type="compositionally biased region" description="Low complexity" evidence="3">
    <location>
        <begin position="144"/>
        <end position="155"/>
    </location>
</feature>
<feature type="compositionally biased region" description="Basic and acidic residues" evidence="3">
    <location>
        <begin position="175"/>
        <end position="191"/>
    </location>
</feature>
<feature type="compositionally biased region" description="Basic and acidic residues" evidence="3">
    <location>
        <begin position="223"/>
        <end position="232"/>
    </location>
</feature>
<feature type="compositionally biased region" description="Basic residues" evidence="3">
    <location>
        <begin position="233"/>
        <end position="247"/>
    </location>
</feature>
<feature type="binding site" evidence="2">
    <location>
        <begin position="349"/>
        <end position="356"/>
    </location>
    <ligand>
        <name>GTP</name>
        <dbReference type="ChEBI" id="CHEBI:37565"/>
    </ligand>
</feature>
<feature type="binding site" evidence="2">
    <location>
        <begin position="395"/>
        <end position="399"/>
    </location>
    <ligand>
        <name>GTP</name>
        <dbReference type="ChEBI" id="CHEBI:37565"/>
    </ligand>
</feature>
<feature type="binding site" evidence="2">
    <location>
        <begin position="449"/>
        <end position="452"/>
    </location>
    <ligand>
        <name>GTP</name>
        <dbReference type="ChEBI" id="CHEBI:37565"/>
    </ligand>
</feature>
<evidence type="ECO:0000250" key="1"/>
<evidence type="ECO:0000255" key="2">
    <source>
        <dbReference type="HAMAP-Rule" id="MF_00100"/>
    </source>
</evidence>
<evidence type="ECO:0000256" key="3">
    <source>
        <dbReference type="SAM" id="MobiDB-lite"/>
    </source>
</evidence>
<keyword id="KW-0963">Cytoplasm</keyword>
<keyword id="KW-0342">GTP-binding</keyword>
<keyword id="KW-0396">Initiation factor</keyword>
<keyword id="KW-0547">Nucleotide-binding</keyword>
<keyword id="KW-0648">Protein biosynthesis</keyword>
<dbReference type="EMBL" id="FM209186">
    <property type="protein sequence ID" value="CAW29883.1"/>
    <property type="molecule type" value="Genomic_DNA"/>
</dbReference>
<dbReference type="RefSeq" id="WP_003095190.1">
    <property type="nucleotide sequence ID" value="NC_011770.1"/>
</dbReference>
<dbReference type="SMR" id="B7V1F6"/>
<dbReference type="KEGG" id="pag:PLES_51291"/>
<dbReference type="HOGENOM" id="CLU_006301_6_1_6"/>
<dbReference type="GO" id="GO:0005829">
    <property type="term" value="C:cytosol"/>
    <property type="evidence" value="ECO:0007669"/>
    <property type="project" value="TreeGrafter"/>
</dbReference>
<dbReference type="GO" id="GO:0005525">
    <property type="term" value="F:GTP binding"/>
    <property type="evidence" value="ECO:0007669"/>
    <property type="project" value="UniProtKB-KW"/>
</dbReference>
<dbReference type="GO" id="GO:0003924">
    <property type="term" value="F:GTPase activity"/>
    <property type="evidence" value="ECO:0007669"/>
    <property type="project" value="UniProtKB-UniRule"/>
</dbReference>
<dbReference type="GO" id="GO:0003743">
    <property type="term" value="F:translation initiation factor activity"/>
    <property type="evidence" value="ECO:0007669"/>
    <property type="project" value="UniProtKB-UniRule"/>
</dbReference>
<dbReference type="CDD" id="cd01887">
    <property type="entry name" value="IF2_eIF5B"/>
    <property type="match status" value="1"/>
</dbReference>
<dbReference type="CDD" id="cd03702">
    <property type="entry name" value="IF2_mtIF2_II"/>
    <property type="match status" value="1"/>
</dbReference>
<dbReference type="CDD" id="cd03692">
    <property type="entry name" value="mtIF2_IVc"/>
    <property type="match status" value="1"/>
</dbReference>
<dbReference type="FunFam" id="2.40.30.10:FF:000007">
    <property type="entry name" value="Translation initiation factor IF-2"/>
    <property type="match status" value="1"/>
</dbReference>
<dbReference type="FunFam" id="2.40.30.10:FF:000008">
    <property type="entry name" value="Translation initiation factor IF-2"/>
    <property type="match status" value="1"/>
</dbReference>
<dbReference type="FunFam" id="3.40.50.10050:FF:000001">
    <property type="entry name" value="Translation initiation factor IF-2"/>
    <property type="match status" value="1"/>
</dbReference>
<dbReference type="FunFam" id="3.40.50.300:FF:000019">
    <property type="entry name" value="Translation initiation factor IF-2"/>
    <property type="match status" value="1"/>
</dbReference>
<dbReference type="Gene3D" id="3.40.50.300">
    <property type="entry name" value="P-loop containing nucleotide triphosphate hydrolases"/>
    <property type="match status" value="1"/>
</dbReference>
<dbReference type="Gene3D" id="3.30.56.50">
    <property type="entry name" value="Putative DNA-binding domain, N-terminal subdomain of bacterial translation initiation factor IF2"/>
    <property type="match status" value="1"/>
</dbReference>
<dbReference type="Gene3D" id="2.40.30.10">
    <property type="entry name" value="Translation factors"/>
    <property type="match status" value="2"/>
</dbReference>
<dbReference type="Gene3D" id="3.40.50.10050">
    <property type="entry name" value="Translation initiation factor IF- 2, domain 3"/>
    <property type="match status" value="1"/>
</dbReference>
<dbReference type="HAMAP" id="MF_00100_B">
    <property type="entry name" value="IF_2_B"/>
    <property type="match status" value="1"/>
</dbReference>
<dbReference type="InterPro" id="IPR009061">
    <property type="entry name" value="DNA-bd_dom_put_sf"/>
</dbReference>
<dbReference type="InterPro" id="IPR053905">
    <property type="entry name" value="EF-G-like_DII"/>
</dbReference>
<dbReference type="InterPro" id="IPR013575">
    <property type="entry name" value="IF2_assoc_dom_bac"/>
</dbReference>
<dbReference type="InterPro" id="IPR044145">
    <property type="entry name" value="IF2_II"/>
</dbReference>
<dbReference type="InterPro" id="IPR006847">
    <property type="entry name" value="IF2_N"/>
</dbReference>
<dbReference type="InterPro" id="IPR027417">
    <property type="entry name" value="P-loop_NTPase"/>
</dbReference>
<dbReference type="InterPro" id="IPR005225">
    <property type="entry name" value="Small_GTP-bd"/>
</dbReference>
<dbReference type="InterPro" id="IPR000795">
    <property type="entry name" value="T_Tr_GTP-bd_dom"/>
</dbReference>
<dbReference type="InterPro" id="IPR000178">
    <property type="entry name" value="TF_IF2_bacterial-like"/>
</dbReference>
<dbReference type="InterPro" id="IPR015760">
    <property type="entry name" value="TIF_IF2"/>
</dbReference>
<dbReference type="InterPro" id="IPR023115">
    <property type="entry name" value="TIF_IF2_dom3"/>
</dbReference>
<dbReference type="InterPro" id="IPR036925">
    <property type="entry name" value="TIF_IF2_dom3_sf"/>
</dbReference>
<dbReference type="InterPro" id="IPR009000">
    <property type="entry name" value="Transl_B-barrel_sf"/>
</dbReference>
<dbReference type="NCBIfam" id="TIGR00487">
    <property type="entry name" value="IF-2"/>
    <property type="match status" value="1"/>
</dbReference>
<dbReference type="NCBIfam" id="TIGR00231">
    <property type="entry name" value="small_GTP"/>
    <property type="match status" value="1"/>
</dbReference>
<dbReference type="PANTHER" id="PTHR43381:SF5">
    <property type="entry name" value="TR-TYPE G DOMAIN-CONTAINING PROTEIN"/>
    <property type="match status" value="1"/>
</dbReference>
<dbReference type="PANTHER" id="PTHR43381">
    <property type="entry name" value="TRANSLATION INITIATION FACTOR IF-2-RELATED"/>
    <property type="match status" value="1"/>
</dbReference>
<dbReference type="Pfam" id="PF22042">
    <property type="entry name" value="EF-G_D2"/>
    <property type="match status" value="1"/>
</dbReference>
<dbReference type="Pfam" id="PF00009">
    <property type="entry name" value="GTP_EFTU"/>
    <property type="match status" value="1"/>
</dbReference>
<dbReference type="Pfam" id="PF11987">
    <property type="entry name" value="IF-2"/>
    <property type="match status" value="1"/>
</dbReference>
<dbReference type="Pfam" id="PF08364">
    <property type="entry name" value="IF2_assoc"/>
    <property type="match status" value="1"/>
</dbReference>
<dbReference type="Pfam" id="PF04760">
    <property type="entry name" value="IF2_N"/>
    <property type="match status" value="2"/>
</dbReference>
<dbReference type="SUPFAM" id="SSF52156">
    <property type="entry name" value="Initiation factor IF2/eIF5b, domain 3"/>
    <property type="match status" value="1"/>
</dbReference>
<dbReference type="SUPFAM" id="SSF52540">
    <property type="entry name" value="P-loop containing nucleoside triphosphate hydrolases"/>
    <property type="match status" value="1"/>
</dbReference>
<dbReference type="SUPFAM" id="SSF46955">
    <property type="entry name" value="Putative DNA-binding domain"/>
    <property type="match status" value="1"/>
</dbReference>
<dbReference type="SUPFAM" id="SSF50447">
    <property type="entry name" value="Translation proteins"/>
    <property type="match status" value="2"/>
</dbReference>
<dbReference type="PROSITE" id="PS51722">
    <property type="entry name" value="G_TR_2"/>
    <property type="match status" value="1"/>
</dbReference>
<dbReference type="PROSITE" id="PS01176">
    <property type="entry name" value="IF2"/>
    <property type="match status" value="1"/>
</dbReference>
<proteinExistence type="inferred from homology"/>
<gene>
    <name evidence="2" type="primary">infB</name>
    <name type="ordered locus">PLES_51291</name>
</gene>
<organism>
    <name type="scientific">Pseudomonas aeruginosa (strain LESB58)</name>
    <dbReference type="NCBI Taxonomy" id="557722"/>
    <lineage>
        <taxon>Bacteria</taxon>
        <taxon>Pseudomonadati</taxon>
        <taxon>Pseudomonadota</taxon>
        <taxon>Gammaproteobacteria</taxon>
        <taxon>Pseudomonadales</taxon>
        <taxon>Pseudomonadaceae</taxon>
        <taxon>Pseudomonas</taxon>
    </lineage>
</organism>
<name>IF2_PSEA8</name>